<proteinExistence type="predicted"/>
<keyword id="KW-1185">Reference proteome</keyword>
<name>VG63_BPML5</name>
<protein>
    <recommendedName>
        <fullName>Gene 63 protein</fullName>
    </recommendedName>
    <alternativeName>
        <fullName>Gp63</fullName>
    </alternativeName>
</protein>
<gene>
    <name type="primary">63</name>
</gene>
<accession>Q05276</accession>
<organism>
    <name type="scientific">Mycobacterium phage L5</name>
    <name type="common">Mycobacteriophage L5</name>
    <dbReference type="NCBI Taxonomy" id="31757"/>
    <lineage>
        <taxon>Viruses</taxon>
        <taxon>Duplodnaviria</taxon>
        <taxon>Heunggongvirae</taxon>
        <taxon>Uroviricota</taxon>
        <taxon>Caudoviricetes</taxon>
        <taxon>Fromanvirus</taxon>
    </lineage>
</organism>
<dbReference type="EMBL" id="Z18946">
    <property type="protein sequence ID" value="CAA79439.1"/>
    <property type="molecule type" value="Genomic_DNA"/>
</dbReference>
<dbReference type="PIR" id="S31008">
    <property type="entry name" value="S31008"/>
</dbReference>
<dbReference type="RefSeq" id="NP_039727.1">
    <property type="nucleotide sequence ID" value="NC_001335.1"/>
</dbReference>
<dbReference type="SMR" id="Q05276"/>
<dbReference type="GeneID" id="2942942"/>
<dbReference type="KEGG" id="vg:2942942"/>
<dbReference type="OrthoDB" id="19170at10239"/>
<dbReference type="Proteomes" id="UP000002123">
    <property type="component" value="Genome"/>
</dbReference>
<dbReference type="InterPro" id="IPR035341">
    <property type="entry name" value="Gp63"/>
</dbReference>
<dbReference type="Pfam" id="PF17471">
    <property type="entry name" value="GP63"/>
    <property type="match status" value="1"/>
</dbReference>
<sequence>MTTPNAMPRKTNPLRQQVLGALIKTKPTVWTHKRIDPESPDPRKPRVIETKVHGQEFTGLARNVSEENVDRIAKRWIK</sequence>
<reference key="1">
    <citation type="journal article" date="1993" name="Mol. Microbiol.">
        <title>DNA sequence, structure and gene expression of mycobacteriophage L5: a phage system for mycobacterial genetics.</title>
        <authorList>
            <person name="Hatfull G.F."/>
            <person name="Sarkis G.J."/>
        </authorList>
    </citation>
    <scope>NUCLEOTIDE SEQUENCE [LARGE SCALE GENOMIC DNA]</scope>
</reference>
<feature type="chain" id="PRO_0000164800" description="Gene 63 protein">
    <location>
        <begin position="1"/>
        <end position="78"/>
    </location>
</feature>
<organismHost>
    <name type="scientific">Mycobacterium</name>
    <dbReference type="NCBI Taxonomy" id="1763"/>
</organismHost>